<comment type="function">
    <text evidence="1">DNA-dependent RNA polymerase catalyzes the transcription of DNA into RNA using the four ribonucleoside triphosphates as substrates.</text>
</comment>
<comment type="catalytic activity">
    <reaction evidence="1">
        <text>RNA(n) + a ribonucleoside 5'-triphosphate = RNA(n+1) + diphosphate</text>
        <dbReference type="Rhea" id="RHEA:21248"/>
        <dbReference type="Rhea" id="RHEA-COMP:14527"/>
        <dbReference type="Rhea" id="RHEA-COMP:17342"/>
        <dbReference type="ChEBI" id="CHEBI:33019"/>
        <dbReference type="ChEBI" id="CHEBI:61557"/>
        <dbReference type="ChEBI" id="CHEBI:140395"/>
        <dbReference type="EC" id="2.7.7.6"/>
    </reaction>
</comment>
<comment type="subunit">
    <text evidence="1">Homodimer. The RNAP catalytic core consists of 2 alpha, 1 beta, 1 beta' and 1 omega subunit. When a sigma factor is associated with the core the holoenzyme is formed, which can initiate transcription.</text>
</comment>
<comment type="domain">
    <text evidence="1">The N-terminal domain is essential for RNAP assembly and basal transcription, whereas the C-terminal domain is involved in interaction with transcriptional regulators and with upstream promoter elements.</text>
</comment>
<comment type="similarity">
    <text evidence="1">Belongs to the RNA polymerase alpha chain family.</text>
</comment>
<sequence length="335" mass="37927">MQRNWRELIKPKRLEVETKGLPNTYGKFECEPLERGFGITLGNALRRVLLSSLQGAAITSVKVDGVLHEFSTIPGVLEDVTDVILNLKEVRFKMHSDGPRLVVIEKDGEGEVAAGDIQGGPHVEVLNPEQHICTLEKDARLRMELTVKQGKGYLPADRNIEENQPIGTIPIDAIFSPIRKVSYTVTQARVAQITDYDKLTMEIWSDGSVKPDDALAYSAKILKDQLTIFINFEEEMETTEEEVRAEPVFNDHLFRSVDELELSVRSANCLKNADIRYIGELVQKTEAEMLKTKNFGRKSLNEIKEILTEMGLSLGMKLENFPSRDDIENRRKEQE</sequence>
<dbReference type="EC" id="2.7.7.6" evidence="1"/>
<dbReference type="EMBL" id="CP000478">
    <property type="protein sequence ID" value="ABK17269.1"/>
    <property type="molecule type" value="Genomic_DNA"/>
</dbReference>
<dbReference type="RefSeq" id="WP_011698439.1">
    <property type="nucleotide sequence ID" value="NC_008554.1"/>
</dbReference>
<dbReference type="SMR" id="A0LIL7"/>
<dbReference type="FunCoup" id="A0LIL7">
    <property type="interactions" value="515"/>
</dbReference>
<dbReference type="STRING" id="335543.Sfum_1582"/>
<dbReference type="KEGG" id="sfu:Sfum_1582"/>
<dbReference type="eggNOG" id="COG0202">
    <property type="taxonomic scope" value="Bacteria"/>
</dbReference>
<dbReference type="HOGENOM" id="CLU_053084_0_1_7"/>
<dbReference type="InParanoid" id="A0LIL7"/>
<dbReference type="OrthoDB" id="9805706at2"/>
<dbReference type="Proteomes" id="UP000001784">
    <property type="component" value="Chromosome"/>
</dbReference>
<dbReference type="GO" id="GO:0005737">
    <property type="term" value="C:cytoplasm"/>
    <property type="evidence" value="ECO:0007669"/>
    <property type="project" value="UniProtKB-ARBA"/>
</dbReference>
<dbReference type="GO" id="GO:0000428">
    <property type="term" value="C:DNA-directed RNA polymerase complex"/>
    <property type="evidence" value="ECO:0007669"/>
    <property type="project" value="UniProtKB-KW"/>
</dbReference>
<dbReference type="GO" id="GO:0003677">
    <property type="term" value="F:DNA binding"/>
    <property type="evidence" value="ECO:0007669"/>
    <property type="project" value="UniProtKB-UniRule"/>
</dbReference>
<dbReference type="GO" id="GO:0003899">
    <property type="term" value="F:DNA-directed RNA polymerase activity"/>
    <property type="evidence" value="ECO:0007669"/>
    <property type="project" value="UniProtKB-UniRule"/>
</dbReference>
<dbReference type="GO" id="GO:0046983">
    <property type="term" value="F:protein dimerization activity"/>
    <property type="evidence" value="ECO:0007669"/>
    <property type="project" value="InterPro"/>
</dbReference>
<dbReference type="GO" id="GO:0006351">
    <property type="term" value="P:DNA-templated transcription"/>
    <property type="evidence" value="ECO:0007669"/>
    <property type="project" value="UniProtKB-UniRule"/>
</dbReference>
<dbReference type="CDD" id="cd06928">
    <property type="entry name" value="RNAP_alpha_NTD"/>
    <property type="match status" value="1"/>
</dbReference>
<dbReference type="FunFam" id="1.10.150.20:FF:000001">
    <property type="entry name" value="DNA-directed RNA polymerase subunit alpha"/>
    <property type="match status" value="1"/>
</dbReference>
<dbReference type="FunFam" id="2.170.120.12:FF:000001">
    <property type="entry name" value="DNA-directed RNA polymerase subunit alpha"/>
    <property type="match status" value="1"/>
</dbReference>
<dbReference type="Gene3D" id="1.10.150.20">
    <property type="entry name" value="5' to 3' exonuclease, C-terminal subdomain"/>
    <property type="match status" value="1"/>
</dbReference>
<dbReference type="Gene3D" id="2.170.120.12">
    <property type="entry name" value="DNA-directed RNA polymerase, insert domain"/>
    <property type="match status" value="1"/>
</dbReference>
<dbReference type="Gene3D" id="3.30.1360.10">
    <property type="entry name" value="RNA polymerase, RBP11-like subunit"/>
    <property type="match status" value="1"/>
</dbReference>
<dbReference type="HAMAP" id="MF_00059">
    <property type="entry name" value="RNApol_bact_RpoA"/>
    <property type="match status" value="1"/>
</dbReference>
<dbReference type="InterPro" id="IPR011262">
    <property type="entry name" value="DNA-dir_RNA_pol_insert"/>
</dbReference>
<dbReference type="InterPro" id="IPR011263">
    <property type="entry name" value="DNA-dir_RNA_pol_RpoA/D/Rpb3"/>
</dbReference>
<dbReference type="InterPro" id="IPR011773">
    <property type="entry name" value="DNA-dir_RpoA"/>
</dbReference>
<dbReference type="InterPro" id="IPR036603">
    <property type="entry name" value="RBP11-like"/>
</dbReference>
<dbReference type="InterPro" id="IPR011260">
    <property type="entry name" value="RNAP_asu_C"/>
</dbReference>
<dbReference type="InterPro" id="IPR036643">
    <property type="entry name" value="RNApol_insert_sf"/>
</dbReference>
<dbReference type="NCBIfam" id="NF003513">
    <property type="entry name" value="PRK05182.1-2"/>
    <property type="match status" value="1"/>
</dbReference>
<dbReference type="NCBIfam" id="NF003515">
    <property type="entry name" value="PRK05182.2-1"/>
    <property type="match status" value="1"/>
</dbReference>
<dbReference type="NCBIfam" id="NF003519">
    <property type="entry name" value="PRK05182.2-5"/>
    <property type="match status" value="1"/>
</dbReference>
<dbReference type="NCBIfam" id="TIGR02027">
    <property type="entry name" value="rpoA"/>
    <property type="match status" value="1"/>
</dbReference>
<dbReference type="Pfam" id="PF01000">
    <property type="entry name" value="RNA_pol_A_bac"/>
    <property type="match status" value="1"/>
</dbReference>
<dbReference type="Pfam" id="PF03118">
    <property type="entry name" value="RNA_pol_A_CTD"/>
    <property type="match status" value="1"/>
</dbReference>
<dbReference type="Pfam" id="PF01193">
    <property type="entry name" value="RNA_pol_L"/>
    <property type="match status" value="1"/>
</dbReference>
<dbReference type="SMART" id="SM00662">
    <property type="entry name" value="RPOLD"/>
    <property type="match status" value="1"/>
</dbReference>
<dbReference type="SUPFAM" id="SSF47789">
    <property type="entry name" value="C-terminal domain of RNA polymerase alpha subunit"/>
    <property type="match status" value="1"/>
</dbReference>
<dbReference type="SUPFAM" id="SSF56553">
    <property type="entry name" value="Insert subdomain of RNA polymerase alpha subunit"/>
    <property type="match status" value="1"/>
</dbReference>
<dbReference type="SUPFAM" id="SSF55257">
    <property type="entry name" value="RBP11-like subunits of RNA polymerase"/>
    <property type="match status" value="1"/>
</dbReference>
<feature type="chain" id="PRO_0000296878" description="DNA-directed RNA polymerase subunit alpha">
    <location>
        <begin position="1"/>
        <end position="335"/>
    </location>
</feature>
<feature type="region of interest" description="Alpha N-terminal domain (alpha-NTD)" evidence="1">
    <location>
        <begin position="1"/>
        <end position="233"/>
    </location>
</feature>
<feature type="region of interest" description="Alpha C-terminal domain (alpha-CTD)" evidence="1">
    <location>
        <begin position="249"/>
        <end position="335"/>
    </location>
</feature>
<protein>
    <recommendedName>
        <fullName evidence="1">DNA-directed RNA polymerase subunit alpha</fullName>
        <shortName evidence="1">RNAP subunit alpha</shortName>
        <ecNumber evidence="1">2.7.7.6</ecNumber>
    </recommendedName>
    <alternativeName>
        <fullName evidence="1">RNA polymerase subunit alpha</fullName>
    </alternativeName>
    <alternativeName>
        <fullName evidence="1">Transcriptase subunit alpha</fullName>
    </alternativeName>
</protein>
<keyword id="KW-0240">DNA-directed RNA polymerase</keyword>
<keyword id="KW-0548">Nucleotidyltransferase</keyword>
<keyword id="KW-1185">Reference proteome</keyword>
<keyword id="KW-0804">Transcription</keyword>
<keyword id="KW-0808">Transferase</keyword>
<name>RPOA_SYNFM</name>
<evidence type="ECO:0000255" key="1">
    <source>
        <dbReference type="HAMAP-Rule" id="MF_00059"/>
    </source>
</evidence>
<accession>A0LIL7</accession>
<gene>
    <name evidence="1" type="primary">rpoA</name>
    <name type="ordered locus">Sfum_1582</name>
</gene>
<reference key="1">
    <citation type="submission" date="2006-10" db="EMBL/GenBank/DDBJ databases">
        <title>Complete sequence of Syntrophobacter fumaroxidans MPOB.</title>
        <authorList>
            <consortium name="US DOE Joint Genome Institute"/>
            <person name="Copeland A."/>
            <person name="Lucas S."/>
            <person name="Lapidus A."/>
            <person name="Barry K."/>
            <person name="Detter J.C."/>
            <person name="Glavina del Rio T."/>
            <person name="Hammon N."/>
            <person name="Israni S."/>
            <person name="Pitluck S."/>
            <person name="Goltsman E.G."/>
            <person name="Martinez M."/>
            <person name="Schmutz J."/>
            <person name="Larimer F."/>
            <person name="Land M."/>
            <person name="Hauser L."/>
            <person name="Kyrpides N."/>
            <person name="Kim E."/>
            <person name="Boone D.R."/>
            <person name="Brockman F."/>
            <person name="Culley D."/>
            <person name="Ferry J."/>
            <person name="Gunsalus R."/>
            <person name="McInerney M.J."/>
            <person name="Morrison M."/>
            <person name="Plugge C."/>
            <person name="Rohlin L."/>
            <person name="Scholten J."/>
            <person name="Sieber J."/>
            <person name="Stams A.J.M."/>
            <person name="Worm P."/>
            <person name="Henstra A.M."/>
            <person name="Richardson P."/>
        </authorList>
    </citation>
    <scope>NUCLEOTIDE SEQUENCE [LARGE SCALE GENOMIC DNA]</scope>
    <source>
        <strain>DSM 10017 / MPOB</strain>
    </source>
</reference>
<organism>
    <name type="scientific">Syntrophobacter fumaroxidans (strain DSM 10017 / MPOB)</name>
    <dbReference type="NCBI Taxonomy" id="335543"/>
    <lineage>
        <taxon>Bacteria</taxon>
        <taxon>Pseudomonadati</taxon>
        <taxon>Thermodesulfobacteriota</taxon>
        <taxon>Syntrophobacteria</taxon>
        <taxon>Syntrophobacterales</taxon>
        <taxon>Syntrophobacteraceae</taxon>
        <taxon>Syntrophobacter</taxon>
    </lineage>
</organism>
<proteinExistence type="inferred from homology"/>